<accession>P36191</accession>
<gene>
    <name type="primary">CTXB</name>
</gene>
<keyword id="KW-0044">Antibiotic</keyword>
<keyword id="KW-0929">Antimicrobial</keyword>
<keyword id="KW-0204">Cytolysis</keyword>
<keyword id="KW-0903">Direct protein sequencing</keyword>
<keyword id="KW-0354">Hemolysis</keyword>
<keyword id="KW-0391">Immunity</keyword>
<keyword id="KW-0399">Innate immunity</keyword>
<keyword id="KW-0964">Secreted</keyword>
<reference key="1">
    <citation type="journal article" date="1993" name="Insect Biochem. Mol. Biol.">
        <title>Purification and primary structure of ceratotoxin A and B, two antibacterial peptides from the female reproductive accessory glands of the medfly Ceratitis capitata (Insecta: Diptera).</title>
        <authorList>
            <person name="Marchini D."/>
            <person name="Giordano P.C."/>
            <person name="Amons R."/>
            <person name="Bernini L.F."/>
            <person name="Dallai R."/>
        </authorList>
    </citation>
    <scope>PROTEIN SEQUENCE</scope>
    <source>
        <tissue>Female accessory gland</tissue>
    </source>
</reference>
<dbReference type="PIR" id="B61613">
    <property type="entry name" value="B61613"/>
</dbReference>
<dbReference type="TCDB" id="1.C.52.2.2">
    <property type="family name" value="the dermaseptin (dermaseptin) family"/>
</dbReference>
<dbReference type="GO" id="GO:0005576">
    <property type="term" value="C:extracellular region"/>
    <property type="evidence" value="ECO:0007669"/>
    <property type="project" value="UniProtKB-SubCell"/>
</dbReference>
<dbReference type="GO" id="GO:0042742">
    <property type="term" value="P:defense response to bacterium"/>
    <property type="evidence" value="ECO:0007669"/>
    <property type="project" value="UniProtKB-KW"/>
</dbReference>
<dbReference type="GO" id="GO:0045087">
    <property type="term" value="P:innate immune response"/>
    <property type="evidence" value="ECO:0007669"/>
    <property type="project" value="UniProtKB-KW"/>
</dbReference>
<dbReference type="GO" id="GO:0031640">
    <property type="term" value="P:killing of cells of another organism"/>
    <property type="evidence" value="ECO:0007669"/>
    <property type="project" value="UniProtKB-KW"/>
</dbReference>
<feature type="peptide" id="PRO_0000043593" description="Ceratotoxin-B">
    <location>
        <begin position="1"/>
        <end position="29"/>
    </location>
</feature>
<protein>
    <recommendedName>
        <fullName>Ceratotoxin-B</fullName>
    </recommendedName>
</protein>
<name>CTXB_CERCA</name>
<sequence length="29" mass="2861">SIGSAFKKALPVAKKIGKAALPIAKAALP</sequence>
<organism>
    <name type="scientific">Ceratitis capitata</name>
    <name type="common">Mediterranean fruit fly</name>
    <name type="synonym">Tephritis capitata</name>
    <dbReference type="NCBI Taxonomy" id="7213"/>
    <lineage>
        <taxon>Eukaryota</taxon>
        <taxon>Metazoa</taxon>
        <taxon>Ecdysozoa</taxon>
        <taxon>Arthropoda</taxon>
        <taxon>Hexapoda</taxon>
        <taxon>Insecta</taxon>
        <taxon>Pterygota</taxon>
        <taxon>Neoptera</taxon>
        <taxon>Endopterygota</taxon>
        <taxon>Diptera</taxon>
        <taxon>Brachycera</taxon>
        <taxon>Muscomorpha</taxon>
        <taxon>Tephritoidea</taxon>
        <taxon>Tephritidae</taxon>
        <taxon>Ceratitis</taxon>
        <taxon>Ceratitis</taxon>
    </lineage>
</organism>
<proteinExistence type="evidence at protein level"/>
<comment type="function">
    <text>Female-specific peptides with potent activity against Gram-positive and Gram-negative bacteria. They have as well hemolytic activity.</text>
</comment>
<comment type="biophysicochemical properties">
    <temperatureDependence>
        <text>Thermostable. Still active at 100 degrees Celsius.</text>
    </temperatureDependence>
</comment>
<comment type="subunit">
    <text>Homomer of four to six subunits.</text>
</comment>
<comment type="subcellular location">
    <subcellularLocation>
        <location>Secreted</location>
    </subcellularLocation>
</comment>